<reference key="1">
    <citation type="journal article" date="1999" name="Virology">
        <title>The complete DNA sequence of myxoma virus.</title>
        <authorList>
            <person name="Cameron C."/>
            <person name="Hota-Mitchell S."/>
            <person name="Chen L."/>
            <person name="Barrett J.W."/>
            <person name="Cao J.-X."/>
            <person name="Macaulay C."/>
            <person name="Willer D.O."/>
            <person name="Evans D.H."/>
            <person name="McFadden G."/>
        </authorList>
    </citation>
    <scope>NUCLEOTIDE SEQUENCE [LARGE SCALE GENOMIC DNA]</scope>
</reference>
<reference key="2">
    <citation type="journal article" date="1990" name="Virology">
        <title>Myxoma virus and malignant rabbit fibroma virus encode a serpin-like protein important for virus virulence.</title>
        <authorList>
            <person name="Upton C."/>
            <person name="Macen J.L."/>
            <person name="Wishart D.S."/>
            <person name="McFadden G."/>
        </authorList>
    </citation>
    <scope>NUCLEOTIDE SEQUENCE [GENOMIC DNA] OF 1-251</scope>
</reference>
<accession>P22611</accession>
<accession>Q9PWV1</accession>
<comment type="similarity">
    <text evidence="2">Belongs to the poxviruses Kelch family.</text>
</comment>
<dbReference type="EMBL" id="AF170726">
    <property type="protein sequence ID" value="AAF14895.1"/>
    <property type="molecule type" value="Genomic_DNA"/>
</dbReference>
<dbReference type="EMBL" id="AF170726">
    <property type="protein sequence ID" value="AAF15054.1"/>
    <property type="molecule type" value="Genomic_DNA"/>
</dbReference>
<dbReference type="EMBL" id="M35233">
    <property type="protein sequence ID" value="AAA46630.1"/>
    <property type="molecule type" value="Genomic_DNA"/>
</dbReference>
<dbReference type="PIR" id="C36418">
    <property type="entry name" value="C36418"/>
</dbReference>
<dbReference type="RefSeq" id="NP_051721.1">
    <property type="nucleotide sequence ID" value="NC_001132.2"/>
</dbReference>
<dbReference type="RefSeq" id="NP_051871.1">
    <property type="nucleotide sequence ID" value="NC_001132.2"/>
</dbReference>
<dbReference type="SMR" id="P22611"/>
<dbReference type="GeneID" id="932082"/>
<dbReference type="GeneID" id="932179"/>
<dbReference type="KEGG" id="vg:932082"/>
<dbReference type="KEGG" id="vg:932179"/>
<dbReference type="Proteomes" id="UP000000867">
    <property type="component" value="Segment"/>
</dbReference>
<dbReference type="CDD" id="cd14733">
    <property type="entry name" value="BACK"/>
    <property type="match status" value="1"/>
</dbReference>
<dbReference type="CDD" id="cd18186">
    <property type="entry name" value="BTB_POZ_ZBTB_KLHL-like"/>
    <property type="match status" value="1"/>
</dbReference>
<dbReference type="Gene3D" id="1.25.40.420">
    <property type="match status" value="1"/>
</dbReference>
<dbReference type="Gene3D" id="2.120.10.80">
    <property type="entry name" value="Kelch-type beta propeller"/>
    <property type="match status" value="2"/>
</dbReference>
<dbReference type="Gene3D" id="3.30.710.10">
    <property type="entry name" value="Potassium Channel Kv1.1, Chain A"/>
    <property type="match status" value="1"/>
</dbReference>
<dbReference type="InterPro" id="IPR000210">
    <property type="entry name" value="BTB/POZ_dom"/>
</dbReference>
<dbReference type="InterPro" id="IPR015915">
    <property type="entry name" value="Kelch-typ_b-propeller"/>
</dbReference>
<dbReference type="InterPro" id="IPR006652">
    <property type="entry name" value="Kelch_1"/>
</dbReference>
<dbReference type="InterPro" id="IPR011333">
    <property type="entry name" value="SKP1/BTB/POZ_sf"/>
</dbReference>
<dbReference type="InterPro" id="IPR024182">
    <property type="entry name" value="Vaccinia_A55R"/>
</dbReference>
<dbReference type="PANTHER" id="PTHR45632:SF3">
    <property type="entry name" value="KELCH-LIKE PROTEIN 32"/>
    <property type="match status" value="1"/>
</dbReference>
<dbReference type="PANTHER" id="PTHR45632">
    <property type="entry name" value="LD33804P"/>
    <property type="match status" value="1"/>
</dbReference>
<dbReference type="Pfam" id="PF00651">
    <property type="entry name" value="BTB"/>
    <property type="match status" value="1"/>
</dbReference>
<dbReference type="Pfam" id="PF01344">
    <property type="entry name" value="Kelch_1"/>
    <property type="match status" value="3"/>
</dbReference>
<dbReference type="PIRSF" id="PIRSF003716">
    <property type="entry name" value="VAC_F3L"/>
    <property type="match status" value="1"/>
</dbReference>
<dbReference type="SMART" id="SM00225">
    <property type="entry name" value="BTB"/>
    <property type="match status" value="1"/>
</dbReference>
<dbReference type="SMART" id="SM00612">
    <property type="entry name" value="Kelch"/>
    <property type="match status" value="4"/>
</dbReference>
<dbReference type="SUPFAM" id="SSF117281">
    <property type="entry name" value="Kelch motif"/>
    <property type="match status" value="1"/>
</dbReference>
<dbReference type="SUPFAM" id="SSF54695">
    <property type="entry name" value="POZ domain"/>
    <property type="match status" value="1"/>
</dbReference>
<dbReference type="PROSITE" id="PS50097">
    <property type="entry name" value="BTB"/>
    <property type="match status" value="1"/>
</dbReference>
<proteinExistence type="inferred from homology"/>
<keyword id="KW-0880">Kelch repeat</keyword>
<keyword id="KW-1185">Reference proteome</keyword>
<keyword id="KW-0677">Repeat</keyword>
<sequence>MMSYPLYKLFLKGKLCDVEIVAEGKSIRAHRLVLSAYSKYFYNLFNGNFLEKNVDVIDLEADYKTVFDVIYYMYTESIELHKGNTESIFSLVHYLQIKPLIKKCIYEFNSIVNEENCIRLFKFAELYDLSELKRRARWLMPSLVMNEKDRLREMSLDDLSLMLVQIRNTVDRSIALSAITEWIQTNVRERRRHAVHLATCLGDVPGTASSRAVYKHYMSELRIRVTEFQPAYHNCVVYLGGSMKGRVTALDPETGKSVVLSTWWPEERWECFTAVCMNDVLYFAGGKLDAVPTRQVLSYDVKANTWSRQPNLSEFRSDAAAYAIGGCIYIIGGYDANDRPTNTTLYWRPGYDRWYRGPTLVEAVAETSAVCYKNEIWVLGGRIHRDGVPDVTDVVQKLSGGTWTKVNELSVPKASVTAIVYKERLYCVGGLVDRYAPTNEVIRYRDDTNEWEYVGSTKIERGGAVGCVYNDELYVFGGTDTFTSERYNGVIWKRANDVSCHFATMNAAYATYLEL</sequence>
<organismHost>
    <name type="scientific">Oryctolagus cuniculus</name>
    <name type="common">Rabbit</name>
    <dbReference type="NCBI Taxonomy" id="9986"/>
</organismHost>
<feature type="chain" id="PRO_0000119170" description="Kelch repeat protein M-T8">
    <location>
        <begin position="1"/>
        <end position="515"/>
    </location>
</feature>
<feature type="domain" description="BTB" evidence="1">
    <location>
        <begin position="16"/>
        <end position="82"/>
    </location>
</feature>
<feature type="repeat" description="Kelch 1">
    <location>
        <begin position="280"/>
        <end position="326"/>
    </location>
</feature>
<feature type="repeat" description="Kelch 2">
    <location>
        <begin position="328"/>
        <end position="374"/>
    </location>
</feature>
<feature type="repeat" description="Kelch 3">
    <location>
        <begin position="376"/>
        <end position="423"/>
    </location>
</feature>
<feature type="repeat" description="Kelch 4">
    <location>
        <begin position="424"/>
        <end position="471"/>
    </location>
</feature>
<feature type="repeat" description="Kelch 5">
    <location>
        <begin position="473"/>
        <end position="512"/>
    </location>
</feature>
<evidence type="ECO:0000255" key="1">
    <source>
        <dbReference type="PROSITE-ProRule" id="PRU00037"/>
    </source>
</evidence>
<evidence type="ECO:0000305" key="2"/>
<organism>
    <name type="scientific">Myxoma virus (strain Lausanne)</name>
    <name type="common">MYXV</name>
    <dbReference type="NCBI Taxonomy" id="31530"/>
    <lineage>
        <taxon>Viruses</taxon>
        <taxon>Varidnaviria</taxon>
        <taxon>Bamfordvirae</taxon>
        <taxon>Nucleocytoviricota</taxon>
        <taxon>Pokkesviricetes</taxon>
        <taxon>Chitovirales</taxon>
        <taxon>Poxviridae</taxon>
        <taxon>Chordopoxvirinae</taxon>
        <taxon>Leporipoxvirus</taxon>
        <taxon>Myxoma virus</taxon>
    </lineage>
</organism>
<name>VMT8_MYXVL</name>
<protein>
    <recommendedName>
        <fullName>Kelch repeat protein M-T8</fullName>
    </recommendedName>
</protein>
<gene>
    <name type="ordered locus">m008L</name>
</gene>